<reference key="1">
    <citation type="journal article" date="1997" name="Science">
        <title>The complete genome sequence of Escherichia coli K-12.</title>
        <authorList>
            <person name="Blattner F.R."/>
            <person name="Plunkett G. III"/>
            <person name="Bloch C.A."/>
            <person name="Perna N.T."/>
            <person name="Burland V."/>
            <person name="Riley M."/>
            <person name="Collado-Vides J."/>
            <person name="Glasner J.D."/>
            <person name="Rode C.K."/>
            <person name="Mayhew G.F."/>
            <person name="Gregor J."/>
            <person name="Davis N.W."/>
            <person name="Kirkpatrick H.A."/>
            <person name="Goeden M.A."/>
            <person name="Rose D.J."/>
            <person name="Mau B."/>
            <person name="Shao Y."/>
        </authorList>
    </citation>
    <scope>NUCLEOTIDE SEQUENCE [LARGE SCALE GENOMIC DNA]</scope>
    <source>
        <strain>K12 / MG1655 / ATCC 47076</strain>
    </source>
</reference>
<reference key="2">
    <citation type="journal article" date="2006" name="Mol. Syst. Biol.">
        <title>Highly accurate genome sequences of Escherichia coli K-12 strains MG1655 and W3110.</title>
        <authorList>
            <person name="Hayashi K."/>
            <person name="Morooka N."/>
            <person name="Yamamoto Y."/>
            <person name="Fujita K."/>
            <person name="Isono K."/>
            <person name="Choi S."/>
            <person name="Ohtsubo E."/>
            <person name="Baba T."/>
            <person name="Wanner B.L."/>
            <person name="Mori H."/>
            <person name="Horiuchi T."/>
        </authorList>
    </citation>
    <scope>NUCLEOTIDE SEQUENCE [LARGE SCALE GENOMIC DNA]</scope>
    <source>
        <strain>K12 / W3110 / ATCC 27325 / DSM 5911</strain>
    </source>
</reference>
<dbReference type="EMBL" id="U00096">
    <property type="status" value="NOT_ANNOTATED_CDS"/>
    <property type="molecule type" value="Genomic_DNA"/>
</dbReference>
<dbReference type="EMBL" id="AP009048">
    <property type="protein sequence ID" value="BAA16517.2"/>
    <property type="status" value="ALT_SEQ"/>
    <property type="molecule type" value="Genomic_DNA"/>
</dbReference>
<dbReference type="EMBL" id="AP009048">
    <property type="protein sequence ID" value="BAE76777.1"/>
    <property type="status" value="ALT_SEQ"/>
    <property type="molecule type" value="Genomic_DNA"/>
</dbReference>
<dbReference type="EMBL" id="AP009048">
    <property type="protein sequence ID" value="BAE76778.1"/>
    <property type="status" value="ALT_SEQ"/>
    <property type="molecule type" value="Genomic_DNA"/>
</dbReference>
<dbReference type="PIR" id="C65045">
    <property type="entry name" value="C65045"/>
</dbReference>
<dbReference type="PIR" id="G65044">
    <property type="entry name" value="G65044"/>
</dbReference>
<dbReference type="SMR" id="P76616"/>
<dbReference type="BioGRID" id="4259213">
    <property type="interactions" value="18"/>
</dbReference>
<dbReference type="BioGRID" id="4262257">
    <property type="interactions" value="17"/>
</dbReference>
<dbReference type="FunCoup" id="P76616">
    <property type="interactions" value="5"/>
</dbReference>
<dbReference type="IntAct" id="P76616">
    <property type="interactions" value="1"/>
</dbReference>
<dbReference type="KEGG" id="ecj:JW2631"/>
<dbReference type="KEGG" id="ecj:JW2633"/>
<dbReference type="KEGG" id="ecj:JW5425"/>
<dbReference type="EchoBASE" id="EB3293"/>
<dbReference type="eggNOG" id="COG0366">
    <property type="taxonomic scope" value="Bacteria"/>
</dbReference>
<dbReference type="HOGENOM" id="CLU_2206058_0_0_6"/>
<dbReference type="InParanoid" id="P76616"/>
<dbReference type="Proteomes" id="UP000000625">
    <property type="component" value="Chromosome"/>
</dbReference>
<dbReference type="GO" id="GO:0004556">
    <property type="term" value="F:alpha-amylase activity"/>
    <property type="evidence" value="ECO:0000318"/>
    <property type="project" value="GO_Central"/>
</dbReference>
<dbReference type="GO" id="GO:0043169">
    <property type="term" value="F:cation binding"/>
    <property type="evidence" value="ECO:0007669"/>
    <property type="project" value="InterPro"/>
</dbReference>
<dbReference type="GO" id="GO:0005975">
    <property type="term" value="P:carbohydrate metabolic process"/>
    <property type="evidence" value="ECO:0007669"/>
    <property type="project" value="InterPro"/>
</dbReference>
<dbReference type="CDD" id="cd11315">
    <property type="entry name" value="AmyAc_bac1_AmyA"/>
    <property type="match status" value="1"/>
</dbReference>
<dbReference type="Gene3D" id="3.20.20.80">
    <property type="entry name" value="Glycosidases"/>
    <property type="match status" value="1"/>
</dbReference>
<dbReference type="Gene3D" id="2.60.40.1180">
    <property type="entry name" value="Golgi alpha-mannosidase II"/>
    <property type="match status" value="1"/>
</dbReference>
<dbReference type="InterPro" id="IPR006048">
    <property type="entry name" value="A-amylase/branching_C"/>
</dbReference>
<dbReference type="InterPro" id="IPR006047">
    <property type="entry name" value="Glyco_hydro_13_cat_dom"/>
</dbReference>
<dbReference type="InterPro" id="IPR013780">
    <property type="entry name" value="Glyco_hydro_b"/>
</dbReference>
<dbReference type="InterPro" id="IPR017853">
    <property type="entry name" value="Glycoside_hydrolase_SF"/>
</dbReference>
<dbReference type="PANTHER" id="PTHR43447">
    <property type="entry name" value="ALPHA-AMYLASE"/>
    <property type="match status" value="1"/>
</dbReference>
<dbReference type="Pfam" id="PF02806">
    <property type="entry name" value="Alpha-amylase_C"/>
    <property type="match status" value="1"/>
</dbReference>
<dbReference type="SMART" id="SM00642">
    <property type="entry name" value="Aamy"/>
    <property type="match status" value="1"/>
</dbReference>
<dbReference type="SUPFAM" id="SSF51445">
    <property type="entry name" value="(Trans)glycosidases"/>
    <property type="match status" value="1"/>
</dbReference>
<dbReference type="SUPFAM" id="SSF51011">
    <property type="entry name" value="Glycosyl hydrolase domain"/>
    <property type="match status" value="1"/>
</dbReference>
<evidence type="ECO:0000305" key="1"/>
<comment type="caution">
    <text evidence="1">Could be the product of a pseudogene.</text>
</comment>
<comment type="sequence caution" evidence="1">
    <conflict type="erroneous termination">
        <sequence resource="EMBL-CDS" id="BAA16517"/>
    </conflict>
    <text>Truncated C-terminus.</text>
</comment>
<comment type="sequence caution" evidence="1">
    <conflict type="erroneous termination">
        <sequence resource="EMBL-CDS" id="BAE76777"/>
    </conflict>
    <text>Truncated C-terminus.</text>
</comment>
<comment type="sequence caution" evidence="1">
    <conflict type="erroneous termination">
        <sequence resource="EMBL-CDS" id="BAE76778"/>
    </conflict>
    <text>Truncated C-terminus.</text>
</comment>
<comment type="sequence caution" evidence="1">
    <conflict type="erroneous termination">
        <sequence resource="EMBL" id="U00096"/>
    </conflict>
    <text>Truncated C-terminus.</text>
</comment>
<protein>
    <recommendedName>
        <fullName>Putative uncharacterized protein YgaQ</fullName>
    </recommendedName>
</protein>
<proteinExistence type="uncertain"/>
<sequence length="750" mass="85227">MFSIKPGPRNLPIDNPTLLSWNITDGDLNSKLNTLEYLNCITNIINSCGVYPQGLKDREIISTFHAEKVINDLLKNDYKISLSPDTTYRELNKAAQRSITAPDRIGERKTWVYQRDTMIERGDNSGVYQYGRAEHFTHIISDKPSPKDKYVAYAINIPDYELAADVYNINVTSPSGQQETFKILINLEHLRQTLERKSLTAVQKSQCEIITPKKPGEAILHAFNATYQQIRENMSEFARCHYGYIQIPPVTTFRADGPETPEEEKGYWFHAYQPEDLCTIHNPMGDLQDFIALVKDAKKFGIDIIPDYTFNFMGIGGSGKNDLDYPSADIRAKISKDIEGGIPGYWQGQVLIPFIKDPVTKERKQIHPEDIHLTAKDFEASKDNISKDEWENLHALKEKRLNGMPKTTPKSDQVIMLQNQYVREMRKYGVRGLRYDAAKHSKHEQIERSITPPLKNYNERLHNTNLFNPKYHKKAVMNYMEYLVTCQLDEQQMSSLLYERDDLSAIDFSLLMKTIKAFSFGGDLQTLASKPGSTISSIPSERRILININHDFPNNGNLFNDFLFNHQQDEQLAMAYIAALPFSRPLVYWDGQVLKSTTEIKNYDGSTRVGGEAWLNKGCSTYQQLYNEFHALYIDKAGIWSAFEGVSATKNVLAFSRGDSVNINHSPHDGLVIINKGNEEVEGTWPNKLQPGIYKNMGSNSVNIIINNTRKIIPPGKVFTLRGGTLNINIPGRSALLLGKTGEPPNYLYL</sequence>
<gene>
    <name type="primary">ygaQ</name>
    <name type="synonym">ygaR</name>
    <name type="synonym">yqaC</name>
    <name type="synonym">yqaD</name>
    <name type="ordered locus">b4462</name>
    <name type="ordered locus">JW2631/JW2633/JW5425/JW5426</name>
    <name type="ORF">b2654/b2657/b2658</name>
</gene>
<accession>P76616</accession>
<accession>P76619</accession>
<accession>P76620</accession>
<accession>P78259</accession>
<accession>Q2MAC8</accession>
<accession>Q2MAC9</accession>
<accession>Q6BF67</accession>
<organism>
    <name type="scientific">Escherichia coli (strain K12)</name>
    <dbReference type="NCBI Taxonomy" id="83333"/>
    <lineage>
        <taxon>Bacteria</taxon>
        <taxon>Pseudomonadati</taxon>
        <taxon>Pseudomonadota</taxon>
        <taxon>Gammaproteobacteria</taxon>
        <taxon>Enterobacterales</taxon>
        <taxon>Enterobacteriaceae</taxon>
        <taxon>Escherichia</taxon>
    </lineage>
</organism>
<name>YGAQ_ECOLI</name>
<keyword id="KW-1185">Reference proteome</keyword>
<feature type="chain" id="PRO_0000169301" description="Putative uncharacterized protein YgaQ">
    <location>
        <begin position="1"/>
        <end position="750"/>
    </location>
</feature>